<dbReference type="EC" id="2.7.7.27" evidence="1"/>
<dbReference type="EMBL" id="CP001078">
    <property type="protein sequence ID" value="ACD54053.1"/>
    <property type="molecule type" value="Genomic_DNA"/>
</dbReference>
<dbReference type="RefSeq" id="WP_012451824.1">
    <property type="nucleotide sequence ID" value="NC_010723.1"/>
</dbReference>
<dbReference type="SMR" id="B2V046"/>
<dbReference type="KEGG" id="cbt:CLH_3163"/>
<dbReference type="HOGENOM" id="CLU_029499_14_0_9"/>
<dbReference type="UniPathway" id="UPA00164"/>
<dbReference type="GO" id="GO:0005524">
    <property type="term" value="F:ATP binding"/>
    <property type="evidence" value="ECO:0007669"/>
    <property type="project" value="UniProtKB-KW"/>
</dbReference>
<dbReference type="GO" id="GO:0008878">
    <property type="term" value="F:glucose-1-phosphate adenylyltransferase activity"/>
    <property type="evidence" value="ECO:0007669"/>
    <property type="project" value="UniProtKB-UniRule"/>
</dbReference>
<dbReference type="GO" id="GO:0005978">
    <property type="term" value="P:glycogen biosynthetic process"/>
    <property type="evidence" value="ECO:0007669"/>
    <property type="project" value="UniProtKB-UniRule"/>
</dbReference>
<dbReference type="CDD" id="cd02508">
    <property type="entry name" value="ADP_Glucose_PP"/>
    <property type="match status" value="1"/>
</dbReference>
<dbReference type="CDD" id="cd04651">
    <property type="entry name" value="LbH_G1P_AT_C"/>
    <property type="match status" value="1"/>
</dbReference>
<dbReference type="Gene3D" id="2.160.10.10">
    <property type="entry name" value="Hexapeptide repeat proteins"/>
    <property type="match status" value="1"/>
</dbReference>
<dbReference type="Gene3D" id="3.90.550.10">
    <property type="entry name" value="Spore Coat Polysaccharide Biosynthesis Protein SpsA, Chain A"/>
    <property type="match status" value="1"/>
</dbReference>
<dbReference type="HAMAP" id="MF_00624">
    <property type="entry name" value="GlgC"/>
    <property type="match status" value="1"/>
</dbReference>
<dbReference type="InterPro" id="IPR011831">
    <property type="entry name" value="ADP-Glc_PPase"/>
</dbReference>
<dbReference type="InterPro" id="IPR005836">
    <property type="entry name" value="ADP_Glu_pyroP_CS"/>
</dbReference>
<dbReference type="InterPro" id="IPR023049">
    <property type="entry name" value="GlgC_bac"/>
</dbReference>
<dbReference type="InterPro" id="IPR056818">
    <property type="entry name" value="GlmU/GlgC-like_hexapep"/>
</dbReference>
<dbReference type="InterPro" id="IPR005835">
    <property type="entry name" value="NTP_transferase_dom"/>
</dbReference>
<dbReference type="InterPro" id="IPR029044">
    <property type="entry name" value="Nucleotide-diphossugar_trans"/>
</dbReference>
<dbReference type="InterPro" id="IPR011004">
    <property type="entry name" value="Trimer_LpxA-like_sf"/>
</dbReference>
<dbReference type="NCBIfam" id="TIGR02091">
    <property type="entry name" value="glgC"/>
    <property type="match status" value="1"/>
</dbReference>
<dbReference type="NCBIfam" id="NF003670">
    <property type="entry name" value="PRK05293.1"/>
    <property type="match status" value="1"/>
</dbReference>
<dbReference type="PANTHER" id="PTHR43523:SF2">
    <property type="entry name" value="GLUCOSE-1-PHOSPHATE ADENYLYLTRANSFERASE"/>
    <property type="match status" value="1"/>
</dbReference>
<dbReference type="PANTHER" id="PTHR43523">
    <property type="entry name" value="GLUCOSE-1-PHOSPHATE ADENYLYLTRANSFERASE-RELATED"/>
    <property type="match status" value="1"/>
</dbReference>
<dbReference type="Pfam" id="PF24894">
    <property type="entry name" value="Hexapep_GlmU"/>
    <property type="match status" value="1"/>
</dbReference>
<dbReference type="Pfam" id="PF00483">
    <property type="entry name" value="NTP_transferase"/>
    <property type="match status" value="1"/>
</dbReference>
<dbReference type="SUPFAM" id="SSF53448">
    <property type="entry name" value="Nucleotide-diphospho-sugar transferases"/>
    <property type="match status" value="1"/>
</dbReference>
<dbReference type="SUPFAM" id="SSF51161">
    <property type="entry name" value="Trimeric LpxA-like enzymes"/>
    <property type="match status" value="1"/>
</dbReference>
<dbReference type="PROSITE" id="PS00808">
    <property type="entry name" value="ADP_GLC_PYROPHOSPH_1"/>
    <property type="match status" value="1"/>
</dbReference>
<dbReference type="PROSITE" id="PS00809">
    <property type="entry name" value="ADP_GLC_PYROPHOSPH_2"/>
    <property type="match status" value="1"/>
</dbReference>
<dbReference type="PROSITE" id="PS00810">
    <property type="entry name" value="ADP_GLC_PYROPHOSPH_3"/>
    <property type="match status" value="1"/>
</dbReference>
<protein>
    <recommendedName>
        <fullName evidence="1">Glucose-1-phosphate adenylyltransferase</fullName>
        <ecNumber evidence="1">2.7.7.27</ecNumber>
    </recommendedName>
    <alternativeName>
        <fullName evidence="1">ADP-glucose pyrophosphorylase</fullName>
        <shortName evidence="1">ADPGlc PPase</shortName>
    </alternativeName>
    <alternativeName>
        <fullName evidence="1">ADP-glucose synthase</fullName>
    </alternativeName>
</protein>
<proteinExistence type="inferred from homology"/>
<comment type="function">
    <text evidence="1">Involved in the biosynthesis of ADP-glucose, a building block required for the elongation reactions to produce glycogen. Catalyzes the reaction between ATP and alpha-D-glucose 1-phosphate (G1P) to produce pyrophosphate and ADP-Glc.</text>
</comment>
<comment type="catalytic activity">
    <reaction evidence="1">
        <text>alpha-D-glucose 1-phosphate + ATP + H(+) = ADP-alpha-D-glucose + diphosphate</text>
        <dbReference type="Rhea" id="RHEA:12120"/>
        <dbReference type="ChEBI" id="CHEBI:15378"/>
        <dbReference type="ChEBI" id="CHEBI:30616"/>
        <dbReference type="ChEBI" id="CHEBI:33019"/>
        <dbReference type="ChEBI" id="CHEBI:57498"/>
        <dbReference type="ChEBI" id="CHEBI:58601"/>
        <dbReference type="EC" id="2.7.7.27"/>
    </reaction>
</comment>
<comment type="pathway">
    <text evidence="1">Glycan biosynthesis; glycogen biosynthesis.</text>
</comment>
<comment type="subunit">
    <text evidence="1">Homotetramer.</text>
</comment>
<comment type="similarity">
    <text evidence="1">Belongs to the bacterial/plant glucose-1-phosphate adenylyltransferase family.</text>
</comment>
<sequence length="386" mass="42841">MGNTEIVAMILAGGQGSRLGVLTKKLAKPAVPFGGKYRIIDFPLSNCANSGIYTVGVLTQYKPLELNAHIGIGLPWDLDRKDGGVSILPPYQEEKGGNWYKGTANAIYQNIEFVDRYDPEYVLILSGDHIYKMNYTKMLEFHKEKNADATIGVIEVPVNEASRFGIMNTRDDMSIYEFEEKPKIPKSNLASMGIYIFNWKTLKKYLRNDEANKSSSNDFGKDIIPSMLNDGGKMVAYPFEGYWKDVGTIESLWQANMDLLKSDNKLNLHDQDWRIYSTNPVRPAQYIGENAKVTNSLIVEGCTVNGTVQNSVLFQGVQVGKNTIIKDSVIMTNAKIGDNVIIEKAIIGNDAVIRKDCVIGTGDEIEIVAAKEEVKMGSIMKNSKAV</sequence>
<reference key="1">
    <citation type="submission" date="2008-05" db="EMBL/GenBank/DDBJ databases">
        <title>Complete genome sequence of Clostridium botulinum E3 str. Alaska E43.</title>
        <authorList>
            <person name="Brinkac L.M."/>
            <person name="Brown J.L."/>
            <person name="Bruce D."/>
            <person name="Detter C."/>
            <person name="Munk C."/>
            <person name="Smith L.A."/>
            <person name="Smith T.J."/>
            <person name="Sutton G."/>
            <person name="Brettin T.S."/>
        </authorList>
    </citation>
    <scope>NUCLEOTIDE SEQUENCE [LARGE SCALE GENOMIC DNA]</scope>
    <source>
        <strain>Alaska E43 / Type E3</strain>
    </source>
</reference>
<gene>
    <name evidence="1" type="primary">glgC</name>
    <name type="ordered locus">CLH_3163</name>
</gene>
<evidence type="ECO:0000255" key="1">
    <source>
        <dbReference type="HAMAP-Rule" id="MF_00624"/>
    </source>
</evidence>
<name>GLGC_CLOBA</name>
<accession>B2V046</accession>
<keyword id="KW-0067">ATP-binding</keyword>
<keyword id="KW-0119">Carbohydrate metabolism</keyword>
<keyword id="KW-0320">Glycogen biosynthesis</keyword>
<keyword id="KW-0321">Glycogen metabolism</keyword>
<keyword id="KW-0547">Nucleotide-binding</keyword>
<keyword id="KW-0548">Nucleotidyltransferase</keyword>
<keyword id="KW-0808">Transferase</keyword>
<feature type="chain" id="PRO_1000130470" description="Glucose-1-phosphate adenylyltransferase">
    <location>
        <begin position="1"/>
        <end position="386"/>
    </location>
</feature>
<feature type="binding site" evidence="1">
    <location>
        <position position="100"/>
    </location>
    <ligand>
        <name>alpha-D-glucose 1-phosphate</name>
        <dbReference type="ChEBI" id="CHEBI:58601"/>
    </ligand>
</feature>
<feature type="binding site" evidence="1">
    <location>
        <position position="165"/>
    </location>
    <ligand>
        <name>alpha-D-glucose 1-phosphate</name>
        <dbReference type="ChEBI" id="CHEBI:58601"/>
    </ligand>
</feature>
<feature type="binding site" evidence="1">
    <location>
        <begin position="180"/>
        <end position="181"/>
    </location>
    <ligand>
        <name>alpha-D-glucose 1-phosphate</name>
        <dbReference type="ChEBI" id="CHEBI:58601"/>
    </ligand>
</feature>
<feature type="binding site" evidence="1">
    <location>
        <position position="191"/>
    </location>
    <ligand>
        <name>alpha-D-glucose 1-phosphate</name>
        <dbReference type="ChEBI" id="CHEBI:58601"/>
    </ligand>
</feature>
<organism>
    <name type="scientific">Clostridium botulinum (strain Alaska E43 / Type E3)</name>
    <dbReference type="NCBI Taxonomy" id="508767"/>
    <lineage>
        <taxon>Bacteria</taxon>
        <taxon>Bacillati</taxon>
        <taxon>Bacillota</taxon>
        <taxon>Clostridia</taxon>
        <taxon>Eubacteriales</taxon>
        <taxon>Clostridiaceae</taxon>
        <taxon>Clostridium</taxon>
    </lineage>
</organism>